<sequence>MTNVTGTERVKRGMAEMQKGGVIMDVVNAEQARIAEEAGAVAVMALERVPADIRAAGGVSRMADPTIVEEVMGAVSIPVMAKCRIGHLVEARVLESLGVDYIDESEVLTPADEVYHLNKRDYTVPFVCGCRDIGEAARRIAEGAAMLRTKGEPGTGNIVEAVRHMRQVNAEIRQVASLREDELMTYAKNTGAPYEVLLEIKRLGRLPVVNFAAGGVATPADAALMMQLGADGVFVGSGIFKSENPEKFARAIVEATTHYEDYELIASLSKGLGNAMKGIEISTLLPEQRMQERGW</sequence>
<gene>
    <name evidence="1" type="primary">pdxS</name>
    <name type="ordered locus">BcerKBAB4_0010</name>
</gene>
<accession>A9VM99</accession>
<name>PDXS_BACMK</name>
<dbReference type="EC" id="4.3.3.6" evidence="1"/>
<dbReference type="EMBL" id="CP000903">
    <property type="protein sequence ID" value="ABY41279.1"/>
    <property type="molecule type" value="Genomic_DNA"/>
</dbReference>
<dbReference type="RefSeq" id="WP_002009615.1">
    <property type="nucleotide sequence ID" value="NC_010184.1"/>
</dbReference>
<dbReference type="SMR" id="A9VM99"/>
<dbReference type="GeneID" id="66264940"/>
<dbReference type="KEGG" id="bwe:BcerKBAB4_0010"/>
<dbReference type="eggNOG" id="COG0214">
    <property type="taxonomic scope" value="Bacteria"/>
</dbReference>
<dbReference type="HOGENOM" id="CLU_055352_1_0_9"/>
<dbReference type="UniPathway" id="UPA00245"/>
<dbReference type="Proteomes" id="UP000002154">
    <property type="component" value="Chromosome"/>
</dbReference>
<dbReference type="GO" id="GO:0036381">
    <property type="term" value="F:pyridoxal 5'-phosphate synthase (glutamine hydrolysing) activity"/>
    <property type="evidence" value="ECO:0007669"/>
    <property type="project" value="UniProtKB-UniRule"/>
</dbReference>
<dbReference type="GO" id="GO:0006520">
    <property type="term" value="P:amino acid metabolic process"/>
    <property type="evidence" value="ECO:0007669"/>
    <property type="project" value="TreeGrafter"/>
</dbReference>
<dbReference type="GO" id="GO:0042823">
    <property type="term" value="P:pyridoxal phosphate biosynthetic process"/>
    <property type="evidence" value="ECO:0007669"/>
    <property type="project" value="UniProtKB-UniRule"/>
</dbReference>
<dbReference type="GO" id="GO:0008615">
    <property type="term" value="P:pyridoxine biosynthetic process"/>
    <property type="evidence" value="ECO:0007669"/>
    <property type="project" value="TreeGrafter"/>
</dbReference>
<dbReference type="CDD" id="cd04727">
    <property type="entry name" value="pdxS"/>
    <property type="match status" value="1"/>
</dbReference>
<dbReference type="FunFam" id="3.20.20.70:FF:000001">
    <property type="entry name" value="Pyridoxine biosynthesis protein PDX1"/>
    <property type="match status" value="1"/>
</dbReference>
<dbReference type="Gene3D" id="3.20.20.70">
    <property type="entry name" value="Aldolase class I"/>
    <property type="match status" value="1"/>
</dbReference>
<dbReference type="HAMAP" id="MF_01824">
    <property type="entry name" value="PdxS"/>
    <property type="match status" value="1"/>
</dbReference>
<dbReference type="InterPro" id="IPR013785">
    <property type="entry name" value="Aldolase_TIM"/>
</dbReference>
<dbReference type="InterPro" id="IPR001852">
    <property type="entry name" value="PdxS/SNZ"/>
</dbReference>
<dbReference type="InterPro" id="IPR033755">
    <property type="entry name" value="PdxS/SNZ_N"/>
</dbReference>
<dbReference type="InterPro" id="IPR011060">
    <property type="entry name" value="RibuloseP-bd_barrel"/>
</dbReference>
<dbReference type="NCBIfam" id="NF003215">
    <property type="entry name" value="PRK04180.1"/>
    <property type="match status" value="1"/>
</dbReference>
<dbReference type="NCBIfam" id="TIGR00343">
    <property type="entry name" value="pyridoxal 5'-phosphate synthase lyase subunit PdxS"/>
    <property type="match status" value="1"/>
</dbReference>
<dbReference type="PANTHER" id="PTHR31829">
    <property type="entry name" value="PYRIDOXAL 5'-PHOSPHATE SYNTHASE SUBUNIT SNZ1-RELATED"/>
    <property type="match status" value="1"/>
</dbReference>
<dbReference type="PANTHER" id="PTHR31829:SF0">
    <property type="entry name" value="PYRIDOXAL 5'-PHOSPHATE SYNTHASE SUBUNIT SNZ1-RELATED"/>
    <property type="match status" value="1"/>
</dbReference>
<dbReference type="Pfam" id="PF01680">
    <property type="entry name" value="SOR_SNZ"/>
    <property type="match status" value="1"/>
</dbReference>
<dbReference type="PIRSF" id="PIRSF029271">
    <property type="entry name" value="Pdx1"/>
    <property type="match status" value="1"/>
</dbReference>
<dbReference type="SUPFAM" id="SSF51366">
    <property type="entry name" value="Ribulose-phoshate binding barrel"/>
    <property type="match status" value="1"/>
</dbReference>
<dbReference type="PROSITE" id="PS01235">
    <property type="entry name" value="PDXS_SNZ_1"/>
    <property type="match status" value="1"/>
</dbReference>
<dbReference type="PROSITE" id="PS51129">
    <property type="entry name" value="PDXS_SNZ_2"/>
    <property type="match status" value="1"/>
</dbReference>
<feature type="chain" id="PRO_1000188212" description="Pyridoxal 5'-phosphate synthase subunit PdxS">
    <location>
        <begin position="1"/>
        <end position="295"/>
    </location>
</feature>
<feature type="active site" description="Schiff-base intermediate with D-ribose 5-phosphate" evidence="1">
    <location>
        <position position="82"/>
    </location>
</feature>
<feature type="binding site" evidence="1">
    <location>
        <position position="25"/>
    </location>
    <ligand>
        <name>D-ribose 5-phosphate</name>
        <dbReference type="ChEBI" id="CHEBI:78346"/>
    </ligand>
</feature>
<feature type="binding site" evidence="1">
    <location>
        <position position="154"/>
    </location>
    <ligand>
        <name>D-ribose 5-phosphate</name>
        <dbReference type="ChEBI" id="CHEBI:78346"/>
    </ligand>
</feature>
<feature type="binding site" evidence="1">
    <location>
        <position position="166"/>
    </location>
    <ligand>
        <name>D-glyceraldehyde 3-phosphate</name>
        <dbReference type="ChEBI" id="CHEBI:59776"/>
    </ligand>
</feature>
<feature type="binding site" evidence="1">
    <location>
        <position position="215"/>
    </location>
    <ligand>
        <name>D-ribose 5-phosphate</name>
        <dbReference type="ChEBI" id="CHEBI:78346"/>
    </ligand>
</feature>
<feature type="binding site" evidence="1">
    <location>
        <begin position="236"/>
        <end position="237"/>
    </location>
    <ligand>
        <name>D-ribose 5-phosphate</name>
        <dbReference type="ChEBI" id="CHEBI:78346"/>
    </ligand>
</feature>
<keyword id="KW-0456">Lyase</keyword>
<keyword id="KW-0663">Pyridoxal phosphate</keyword>
<keyword id="KW-0704">Schiff base</keyword>
<proteinExistence type="inferred from homology"/>
<protein>
    <recommendedName>
        <fullName evidence="1">Pyridoxal 5'-phosphate synthase subunit PdxS</fullName>
        <shortName evidence="1">PLP synthase subunit PdxS</shortName>
        <ecNumber evidence="1">4.3.3.6</ecNumber>
    </recommendedName>
    <alternativeName>
        <fullName evidence="1">Pdx1</fullName>
    </alternativeName>
</protein>
<reference key="1">
    <citation type="journal article" date="2008" name="Chem. Biol. Interact.">
        <title>Extending the Bacillus cereus group genomics to putative food-borne pathogens of different toxicity.</title>
        <authorList>
            <person name="Lapidus A."/>
            <person name="Goltsman E."/>
            <person name="Auger S."/>
            <person name="Galleron N."/>
            <person name="Segurens B."/>
            <person name="Dossat C."/>
            <person name="Land M.L."/>
            <person name="Broussolle V."/>
            <person name="Brillard J."/>
            <person name="Guinebretiere M.-H."/>
            <person name="Sanchis V."/>
            <person name="Nguen-the C."/>
            <person name="Lereclus D."/>
            <person name="Richardson P."/>
            <person name="Wincker P."/>
            <person name="Weissenbach J."/>
            <person name="Ehrlich S.D."/>
            <person name="Sorokin A."/>
        </authorList>
    </citation>
    <scope>NUCLEOTIDE SEQUENCE [LARGE SCALE GENOMIC DNA]</scope>
    <source>
        <strain>KBAB4</strain>
    </source>
</reference>
<evidence type="ECO:0000255" key="1">
    <source>
        <dbReference type="HAMAP-Rule" id="MF_01824"/>
    </source>
</evidence>
<organism>
    <name type="scientific">Bacillus mycoides (strain KBAB4)</name>
    <name type="common">Bacillus weihenstephanensis</name>
    <dbReference type="NCBI Taxonomy" id="315730"/>
    <lineage>
        <taxon>Bacteria</taxon>
        <taxon>Bacillati</taxon>
        <taxon>Bacillota</taxon>
        <taxon>Bacilli</taxon>
        <taxon>Bacillales</taxon>
        <taxon>Bacillaceae</taxon>
        <taxon>Bacillus</taxon>
        <taxon>Bacillus cereus group</taxon>
    </lineage>
</organism>
<comment type="function">
    <text evidence="1">Catalyzes the formation of pyridoxal 5'-phosphate from ribose 5-phosphate (RBP), glyceraldehyde 3-phosphate (G3P) and ammonia. The ammonia is provided by the PdxT subunit. Can also use ribulose 5-phosphate and dihydroxyacetone phosphate as substrates, resulting from enzyme-catalyzed isomerization of RBP and G3P, respectively.</text>
</comment>
<comment type="catalytic activity">
    <reaction evidence="1">
        <text>aldehydo-D-ribose 5-phosphate + D-glyceraldehyde 3-phosphate + L-glutamine = pyridoxal 5'-phosphate + L-glutamate + phosphate + 3 H2O + H(+)</text>
        <dbReference type="Rhea" id="RHEA:31507"/>
        <dbReference type="ChEBI" id="CHEBI:15377"/>
        <dbReference type="ChEBI" id="CHEBI:15378"/>
        <dbReference type="ChEBI" id="CHEBI:29985"/>
        <dbReference type="ChEBI" id="CHEBI:43474"/>
        <dbReference type="ChEBI" id="CHEBI:58273"/>
        <dbReference type="ChEBI" id="CHEBI:58359"/>
        <dbReference type="ChEBI" id="CHEBI:59776"/>
        <dbReference type="ChEBI" id="CHEBI:597326"/>
        <dbReference type="EC" id="4.3.3.6"/>
    </reaction>
</comment>
<comment type="pathway">
    <text evidence="1">Cofactor biosynthesis; pyridoxal 5'-phosphate biosynthesis.</text>
</comment>
<comment type="subunit">
    <text evidence="1">In the presence of PdxT, forms a dodecamer of heterodimers.</text>
</comment>
<comment type="similarity">
    <text evidence="1">Belongs to the PdxS/SNZ family.</text>
</comment>